<feature type="chain" id="PRO_0000142092" description="1-(5-phosphoribosyl)-5-[(5-phosphoribosylamino)methylideneamino] imidazole-4-carboxamide isomerase">
    <location>
        <begin position="1"/>
        <end position="237"/>
    </location>
</feature>
<feature type="active site" description="Proton acceptor" evidence="1">
    <location>
        <position position="8"/>
    </location>
</feature>
<feature type="active site" description="Proton donor" evidence="1">
    <location>
        <position position="129"/>
    </location>
</feature>
<gene>
    <name type="primary">hisA</name>
    <name type="ordered locus">MJ1532</name>
</gene>
<evidence type="ECO:0000250" key="1"/>
<evidence type="ECO:0000305" key="2"/>
<sequence length="237" mass="26132">MIIIPAVDLKDKKCVQLIQGDPNKKHLELNNPVEVAKKFVDEGAEYLHIIDLDAAFGTGNNRDVIKNIIKEVNVPVEVGGGIRNLEIAKELISLGVDRVIVGTKAILEPKFIDDLNKEIGKDKIVLAVECKEGKVVIKGWKEKVDKTPIEVIKEFEDKVGYILFTNVDVEGLLKGINVDIIKELIEKTDIPIIYSGGITTLEDIKALKELGIYGVVIGSALYKGLIDLKKALEIVKN</sequence>
<accession>Q58927</accession>
<keyword id="KW-0028">Amino-acid biosynthesis</keyword>
<keyword id="KW-0963">Cytoplasm</keyword>
<keyword id="KW-0368">Histidine biosynthesis</keyword>
<keyword id="KW-0413">Isomerase</keyword>
<keyword id="KW-1185">Reference proteome</keyword>
<organism>
    <name type="scientific">Methanocaldococcus jannaschii (strain ATCC 43067 / DSM 2661 / JAL-1 / JCM 10045 / NBRC 100440)</name>
    <name type="common">Methanococcus jannaschii</name>
    <dbReference type="NCBI Taxonomy" id="243232"/>
    <lineage>
        <taxon>Archaea</taxon>
        <taxon>Methanobacteriati</taxon>
        <taxon>Methanobacteriota</taxon>
        <taxon>Methanomada group</taxon>
        <taxon>Methanococci</taxon>
        <taxon>Methanococcales</taxon>
        <taxon>Methanocaldococcaceae</taxon>
        <taxon>Methanocaldococcus</taxon>
    </lineage>
</organism>
<dbReference type="EC" id="5.3.1.16"/>
<dbReference type="EMBL" id="L77117">
    <property type="protein sequence ID" value="AAB99553.1"/>
    <property type="molecule type" value="Genomic_DNA"/>
</dbReference>
<dbReference type="PIR" id="C64491">
    <property type="entry name" value="C64491"/>
</dbReference>
<dbReference type="RefSeq" id="WP_010871056.1">
    <property type="nucleotide sequence ID" value="NC_000909.1"/>
</dbReference>
<dbReference type="SMR" id="Q58927"/>
<dbReference type="FunCoup" id="Q58927">
    <property type="interactions" value="147"/>
</dbReference>
<dbReference type="STRING" id="243232.MJ_1532"/>
<dbReference type="PaxDb" id="243232-MJ_1532"/>
<dbReference type="EnsemblBacteria" id="AAB99553">
    <property type="protein sequence ID" value="AAB99553"/>
    <property type="gene ID" value="MJ_1532"/>
</dbReference>
<dbReference type="GeneID" id="1452440"/>
<dbReference type="KEGG" id="mja:MJ_1532"/>
<dbReference type="eggNOG" id="arCOG00618">
    <property type="taxonomic scope" value="Archaea"/>
</dbReference>
<dbReference type="HOGENOM" id="CLU_048577_1_1_2"/>
<dbReference type="InParanoid" id="Q58927"/>
<dbReference type="OrthoDB" id="52866at2157"/>
<dbReference type="PhylomeDB" id="Q58927"/>
<dbReference type="UniPathway" id="UPA00031">
    <property type="reaction ID" value="UER00009"/>
</dbReference>
<dbReference type="Proteomes" id="UP000000805">
    <property type="component" value="Chromosome"/>
</dbReference>
<dbReference type="GO" id="GO:0005737">
    <property type="term" value="C:cytoplasm"/>
    <property type="evidence" value="ECO:0000318"/>
    <property type="project" value="GO_Central"/>
</dbReference>
<dbReference type="GO" id="GO:0003949">
    <property type="term" value="F:1-(5-phosphoribosyl)-5-[(5-phosphoribosylamino)methylideneamino]imidazole-4-carboxamide isomerase activity"/>
    <property type="evidence" value="ECO:0000318"/>
    <property type="project" value="GO_Central"/>
</dbReference>
<dbReference type="GO" id="GO:0000105">
    <property type="term" value="P:L-histidine biosynthetic process"/>
    <property type="evidence" value="ECO:0000318"/>
    <property type="project" value="GO_Central"/>
</dbReference>
<dbReference type="CDD" id="cd04732">
    <property type="entry name" value="HisA"/>
    <property type="match status" value="1"/>
</dbReference>
<dbReference type="FunFam" id="3.20.20.70:FF:000009">
    <property type="entry name" value="1-(5-phosphoribosyl)-5-[(5-phosphoribosylamino)methylideneamino] imidazole-4-carboxamide isomerase"/>
    <property type="match status" value="1"/>
</dbReference>
<dbReference type="Gene3D" id="3.20.20.70">
    <property type="entry name" value="Aldolase class I"/>
    <property type="match status" value="1"/>
</dbReference>
<dbReference type="HAMAP" id="MF_01014">
    <property type="entry name" value="HisA"/>
    <property type="match status" value="1"/>
</dbReference>
<dbReference type="InterPro" id="IPR013785">
    <property type="entry name" value="Aldolase_TIM"/>
</dbReference>
<dbReference type="InterPro" id="IPR006062">
    <property type="entry name" value="His_biosynth"/>
</dbReference>
<dbReference type="InterPro" id="IPR006063">
    <property type="entry name" value="HisA_bact_arch"/>
</dbReference>
<dbReference type="InterPro" id="IPR044524">
    <property type="entry name" value="Isoase_HisA-like"/>
</dbReference>
<dbReference type="InterPro" id="IPR023016">
    <property type="entry name" value="Isoase_HisA-like_bact"/>
</dbReference>
<dbReference type="InterPro" id="IPR011060">
    <property type="entry name" value="RibuloseP-bd_barrel"/>
</dbReference>
<dbReference type="NCBIfam" id="TIGR00007">
    <property type="entry name" value="1-(5-phosphoribosyl)-5-[(5-phosphoribosylamino)methylideneamino]imidazole-4-carboxamide isomerase"/>
    <property type="match status" value="1"/>
</dbReference>
<dbReference type="NCBIfam" id="NF010112">
    <property type="entry name" value="PRK13585.1"/>
    <property type="match status" value="1"/>
</dbReference>
<dbReference type="PANTHER" id="PTHR43090">
    <property type="entry name" value="1-(5-PHOSPHORIBOSYL)-5-[(5-PHOSPHORIBOSYLAMINO)METHYLIDENEAMINO] IMIDAZOLE-4-CARBOXAMIDE ISOMERASE"/>
    <property type="match status" value="1"/>
</dbReference>
<dbReference type="PANTHER" id="PTHR43090:SF7">
    <property type="entry name" value="1-(5-PHOSPHORIBOSYL)-5-[(5-PHOSPHORIBOSYLAMINO)METHYLIDENEAMINO] IMIDAZOLE-4-CARBOXAMIDE ISOMERASE"/>
    <property type="match status" value="1"/>
</dbReference>
<dbReference type="Pfam" id="PF00977">
    <property type="entry name" value="His_biosynth"/>
    <property type="match status" value="1"/>
</dbReference>
<dbReference type="SUPFAM" id="SSF51366">
    <property type="entry name" value="Ribulose-phoshate binding barrel"/>
    <property type="match status" value="1"/>
</dbReference>
<comment type="catalytic activity">
    <reaction>
        <text>1-(5-phospho-beta-D-ribosyl)-5-[(5-phospho-beta-D-ribosylamino)methylideneamino]imidazole-4-carboxamide = 5-[(5-phospho-1-deoxy-D-ribulos-1-ylimino)methylamino]-1-(5-phospho-beta-D-ribosyl)imidazole-4-carboxamide</text>
        <dbReference type="Rhea" id="RHEA:15469"/>
        <dbReference type="ChEBI" id="CHEBI:58435"/>
        <dbReference type="ChEBI" id="CHEBI:58525"/>
        <dbReference type="EC" id="5.3.1.16"/>
    </reaction>
</comment>
<comment type="pathway">
    <text>Amino-acid biosynthesis; L-histidine biosynthesis; L-histidine from 5-phospho-alpha-D-ribose 1-diphosphate: step 4/9.</text>
</comment>
<comment type="subcellular location">
    <subcellularLocation>
        <location evidence="1">Cytoplasm</location>
    </subcellularLocation>
</comment>
<comment type="similarity">
    <text evidence="2">Belongs to the HisA/HisF family.</text>
</comment>
<reference key="1">
    <citation type="journal article" date="1996" name="Science">
        <title>Complete genome sequence of the methanogenic archaeon, Methanococcus jannaschii.</title>
        <authorList>
            <person name="Bult C.J."/>
            <person name="White O."/>
            <person name="Olsen G.J."/>
            <person name="Zhou L."/>
            <person name="Fleischmann R.D."/>
            <person name="Sutton G.G."/>
            <person name="Blake J.A."/>
            <person name="FitzGerald L.M."/>
            <person name="Clayton R.A."/>
            <person name="Gocayne J.D."/>
            <person name="Kerlavage A.R."/>
            <person name="Dougherty B.A."/>
            <person name="Tomb J.-F."/>
            <person name="Adams M.D."/>
            <person name="Reich C.I."/>
            <person name="Overbeek R."/>
            <person name="Kirkness E.F."/>
            <person name="Weinstock K.G."/>
            <person name="Merrick J.M."/>
            <person name="Glodek A."/>
            <person name="Scott J.L."/>
            <person name="Geoghagen N.S.M."/>
            <person name="Weidman J.F."/>
            <person name="Fuhrmann J.L."/>
            <person name="Nguyen D."/>
            <person name="Utterback T.R."/>
            <person name="Kelley J.M."/>
            <person name="Peterson J.D."/>
            <person name="Sadow P.W."/>
            <person name="Hanna M.C."/>
            <person name="Cotton M.D."/>
            <person name="Roberts K.M."/>
            <person name="Hurst M.A."/>
            <person name="Kaine B.P."/>
            <person name="Borodovsky M."/>
            <person name="Klenk H.-P."/>
            <person name="Fraser C.M."/>
            <person name="Smith H.O."/>
            <person name="Woese C.R."/>
            <person name="Venter J.C."/>
        </authorList>
    </citation>
    <scope>NUCLEOTIDE SEQUENCE [LARGE SCALE GENOMIC DNA]</scope>
    <source>
        <strain>ATCC 43067 / DSM 2661 / JAL-1 / JCM 10045 / NBRC 100440</strain>
    </source>
</reference>
<name>HIS4_METJA</name>
<proteinExistence type="inferred from homology"/>
<protein>
    <recommendedName>
        <fullName>1-(5-phosphoribosyl)-5-[(5-phosphoribosylamino)methylideneamino] imidazole-4-carboxamide isomerase</fullName>
        <ecNumber>5.3.1.16</ecNumber>
    </recommendedName>
    <alternativeName>
        <fullName>Phosphoribosylformimino-5-aminoimidazole carboxamide ribotide isomerase</fullName>
    </alternativeName>
</protein>